<evidence type="ECO:0000255" key="1">
    <source>
        <dbReference type="HAMAP-Rule" id="MF_00071"/>
    </source>
</evidence>
<accession>Q46GZ6</accession>
<keyword id="KW-0997">Cell inner membrane</keyword>
<keyword id="KW-1003">Cell membrane</keyword>
<keyword id="KW-0342">GTP-binding</keyword>
<keyword id="KW-0378">Hydrolase</keyword>
<keyword id="KW-0472">Membrane</keyword>
<keyword id="KW-0547">Nucleotide-binding</keyword>
<keyword id="KW-0648">Protein biosynthesis</keyword>
<keyword id="KW-1185">Reference proteome</keyword>
<proteinExistence type="inferred from homology"/>
<reference key="1">
    <citation type="journal article" date="2007" name="PLoS Genet.">
        <title>Patterns and implications of gene gain and loss in the evolution of Prochlorococcus.</title>
        <authorList>
            <person name="Kettler G.C."/>
            <person name="Martiny A.C."/>
            <person name="Huang K."/>
            <person name="Zucker J."/>
            <person name="Coleman M.L."/>
            <person name="Rodrigue S."/>
            <person name="Chen F."/>
            <person name="Lapidus A."/>
            <person name="Ferriera S."/>
            <person name="Johnson J."/>
            <person name="Steglich C."/>
            <person name="Church G.M."/>
            <person name="Richardson P."/>
            <person name="Chisholm S.W."/>
        </authorList>
    </citation>
    <scope>NUCLEOTIDE SEQUENCE [LARGE SCALE GENOMIC DNA]</scope>
    <source>
        <strain>NATL2A</strain>
    </source>
</reference>
<gene>
    <name evidence="1" type="primary">lepA</name>
    <name type="ordered locus">PMN2A_1754</name>
</gene>
<organism>
    <name type="scientific">Prochlorococcus marinus (strain NATL2A)</name>
    <dbReference type="NCBI Taxonomy" id="59920"/>
    <lineage>
        <taxon>Bacteria</taxon>
        <taxon>Bacillati</taxon>
        <taxon>Cyanobacteriota</taxon>
        <taxon>Cyanophyceae</taxon>
        <taxon>Synechococcales</taxon>
        <taxon>Prochlorococcaceae</taxon>
        <taxon>Prochlorococcus</taxon>
    </lineage>
</organism>
<comment type="function">
    <text evidence="1">Required for accurate and efficient protein synthesis under certain stress conditions. May act as a fidelity factor of the translation reaction, by catalyzing a one-codon backward translocation of tRNAs on improperly translocated ribosomes. Back-translocation proceeds from a post-translocation (POST) complex to a pre-translocation (PRE) complex, thus giving elongation factor G a second chance to translocate the tRNAs correctly. Binds to ribosomes in a GTP-dependent manner.</text>
</comment>
<comment type="catalytic activity">
    <reaction evidence="1">
        <text>GTP + H2O = GDP + phosphate + H(+)</text>
        <dbReference type="Rhea" id="RHEA:19669"/>
        <dbReference type="ChEBI" id="CHEBI:15377"/>
        <dbReference type="ChEBI" id="CHEBI:15378"/>
        <dbReference type="ChEBI" id="CHEBI:37565"/>
        <dbReference type="ChEBI" id="CHEBI:43474"/>
        <dbReference type="ChEBI" id="CHEBI:58189"/>
        <dbReference type="EC" id="3.6.5.n1"/>
    </reaction>
</comment>
<comment type="subcellular location">
    <subcellularLocation>
        <location evidence="1">Cell inner membrane</location>
        <topology evidence="1">Peripheral membrane protein</topology>
        <orientation evidence="1">Cytoplasmic side</orientation>
    </subcellularLocation>
</comment>
<comment type="similarity">
    <text evidence="1">Belongs to the TRAFAC class translation factor GTPase superfamily. Classic translation factor GTPase family. LepA subfamily.</text>
</comment>
<dbReference type="EC" id="3.6.5.n1" evidence="1"/>
<dbReference type="EMBL" id="CP000095">
    <property type="protein sequence ID" value="AAZ59242.1"/>
    <property type="molecule type" value="Genomic_DNA"/>
</dbReference>
<dbReference type="RefSeq" id="WP_011294387.1">
    <property type="nucleotide sequence ID" value="NC_007335.2"/>
</dbReference>
<dbReference type="SMR" id="Q46GZ6"/>
<dbReference type="STRING" id="59920.PMN2A_1754"/>
<dbReference type="KEGG" id="pmn:PMN2A_1754"/>
<dbReference type="HOGENOM" id="CLU_009995_3_3_3"/>
<dbReference type="OrthoDB" id="580826at2"/>
<dbReference type="PhylomeDB" id="Q46GZ6"/>
<dbReference type="Proteomes" id="UP000002535">
    <property type="component" value="Chromosome"/>
</dbReference>
<dbReference type="GO" id="GO:0005886">
    <property type="term" value="C:plasma membrane"/>
    <property type="evidence" value="ECO:0007669"/>
    <property type="project" value="UniProtKB-SubCell"/>
</dbReference>
<dbReference type="GO" id="GO:0005525">
    <property type="term" value="F:GTP binding"/>
    <property type="evidence" value="ECO:0007669"/>
    <property type="project" value="UniProtKB-KW"/>
</dbReference>
<dbReference type="GO" id="GO:0003924">
    <property type="term" value="F:GTPase activity"/>
    <property type="evidence" value="ECO:0007669"/>
    <property type="project" value="InterPro"/>
</dbReference>
<dbReference type="GO" id="GO:0043022">
    <property type="term" value="F:ribosome binding"/>
    <property type="evidence" value="ECO:0007669"/>
    <property type="project" value="TreeGrafter"/>
</dbReference>
<dbReference type="GO" id="GO:0045727">
    <property type="term" value="P:positive regulation of translation"/>
    <property type="evidence" value="ECO:0007669"/>
    <property type="project" value="TreeGrafter"/>
</dbReference>
<dbReference type="GO" id="GO:0006412">
    <property type="term" value="P:translation"/>
    <property type="evidence" value="ECO:0007669"/>
    <property type="project" value="UniProtKB-KW"/>
</dbReference>
<dbReference type="CDD" id="cd03699">
    <property type="entry name" value="EF4_II"/>
    <property type="match status" value="1"/>
</dbReference>
<dbReference type="CDD" id="cd16260">
    <property type="entry name" value="EF4_III"/>
    <property type="match status" value="1"/>
</dbReference>
<dbReference type="CDD" id="cd01890">
    <property type="entry name" value="LepA"/>
    <property type="match status" value="1"/>
</dbReference>
<dbReference type="CDD" id="cd03709">
    <property type="entry name" value="lepA_C"/>
    <property type="match status" value="1"/>
</dbReference>
<dbReference type="FunFam" id="3.40.50.300:FF:000078">
    <property type="entry name" value="Elongation factor 4"/>
    <property type="match status" value="1"/>
</dbReference>
<dbReference type="FunFam" id="2.40.30.10:FF:000015">
    <property type="entry name" value="Translation factor GUF1, mitochondrial"/>
    <property type="match status" value="1"/>
</dbReference>
<dbReference type="FunFam" id="3.30.70.240:FF:000007">
    <property type="entry name" value="Translation factor GUF1, mitochondrial"/>
    <property type="match status" value="1"/>
</dbReference>
<dbReference type="FunFam" id="3.30.70.2570:FF:000001">
    <property type="entry name" value="Translation factor GUF1, mitochondrial"/>
    <property type="match status" value="1"/>
</dbReference>
<dbReference type="FunFam" id="3.30.70.870:FF:000004">
    <property type="entry name" value="Translation factor GUF1, mitochondrial"/>
    <property type="match status" value="1"/>
</dbReference>
<dbReference type="Gene3D" id="3.30.70.240">
    <property type="match status" value="1"/>
</dbReference>
<dbReference type="Gene3D" id="3.30.70.2570">
    <property type="entry name" value="Elongation factor 4, C-terminal domain"/>
    <property type="match status" value="1"/>
</dbReference>
<dbReference type="Gene3D" id="3.30.70.870">
    <property type="entry name" value="Elongation Factor G (Translational Gtpase), domain 3"/>
    <property type="match status" value="1"/>
</dbReference>
<dbReference type="Gene3D" id="3.40.50.300">
    <property type="entry name" value="P-loop containing nucleotide triphosphate hydrolases"/>
    <property type="match status" value="1"/>
</dbReference>
<dbReference type="Gene3D" id="2.40.30.10">
    <property type="entry name" value="Translation factors"/>
    <property type="match status" value="1"/>
</dbReference>
<dbReference type="HAMAP" id="MF_03138">
    <property type="entry name" value="GUFP"/>
    <property type="match status" value="1"/>
</dbReference>
<dbReference type="HAMAP" id="MF_00071">
    <property type="entry name" value="LepA"/>
    <property type="match status" value="1"/>
</dbReference>
<dbReference type="InterPro" id="IPR006297">
    <property type="entry name" value="EF-4"/>
</dbReference>
<dbReference type="InterPro" id="IPR035647">
    <property type="entry name" value="EFG_III/V"/>
</dbReference>
<dbReference type="InterPro" id="IPR000640">
    <property type="entry name" value="EFG_V-like"/>
</dbReference>
<dbReference type="InterPro" id="IPR004161">
    <property type="entry name" value="EFTu-like_2"/>
</dbReference>
<dbReference type="InterPro" id="IPR031157">
    <property type="entry name" value="G_TR_CS"/>
</dbReference>
<dbReference type="InterPro" id="IPR027518">
    <property type="entry name" value="GUFP"/>
</dbReference>
<dbReference type="InterPro" id="IPR038363">
    <property type="entry name" value="LepA_C_sf"/>
</dbReference>
<dbReference type="InterPro" id="IPR013842">
    <property type="entry name" value="LepA_CTD"/>
</dbReference>
<dbReference type="InterPro" id="IPR035654">
    <property type="entry name" value="LepA_IV"/>
</dbReference>
<dbReference type="InterPro" id="IPR027417">
    <property type="entry name" value="P-loop_NTPase"/>
</dbReference>
<dbReference type="InterPro" id="IPR005225">
    <property type="entry name" value="Small_GTP-bd"/>
</dbReference>
<dbReference type="InterPro" id="IPR000795">
    <property type="entry name" value="T_Tr_GTP-bd_dom"/>
</dbReference>
<dbReference type="InterPro" id="IPR009000">
    <property type="entry name" value="Transl_B-barrel_sf"/>
</dbReference>
<dbReference type="NCBIfam" id="TIGR01393">
    <property type="entry name" value="lepA"/>
    <property type="match status" value="1"/>
</dbReference>
<dbReference type="NCBIfam" id="TIGR00231">
    <property type="entry name" value="small_GTP"/>
    <property type="match status" value="1"/>
</dbReference>
<dbReference type="PANTHER" id="PTHR43512:SF4">
    <property type="entry name" value="TRANSLATION FACTOR GUF1 HOMOLOG, CHLOROPLASTIC"/>
    <property type="match status" value="1"/>
</dbReference>
<dbReference type="PANTHER" id="PTHR43512">
    <property type="entry name" value="TRANSLATION FACTOR GUF1-RELATED"/>
    <property type="match status" value="1"/>
</dbReference>
<dbReference type="Pfam" id="PF00679">
    <property type="entry name" value="EFG_C"/>
    <property type="match status" value="1"/>
</dbReference>
<dbReference type="Pfam" id="PF00009">
    <property type="entry name" value="GTP_EFTU"/>
    <property type="match status" value="1"/>
</dbReference>
<dbReference type="Pfam" id="PF03144">
    <property type="entry name" value="GTP_EFTU_D2"/>
    <property type="match status" value="1"/>
</dbReference>
<dbReference type="Pfam" id="PF06421">
    <property type="entry name" value="LepA_C"/>
    <property type="match status" value="1"/>
</dbReference>
<dbReference type="PRINTS" id="PR00315">
    <property type="entry name" value="ELONGATNFCT"/>
</dbReference>
<dbReference type="SMART" id="SM00838">
    <property type="entry name" value="EFG_C"/>
    <property type="match status" value="1"/>
</dbReference>
<dbReference type="SUPFAM" id="SSF54980">
    <property type="entry name" value="EF-G C-terminal domain-like"/>
    <property type="match status" value="2"/>
</dbReference>
<dbReference type="SUPFAM" id="SSF52540">
    <property type="entry name" value="P-loop containing nucleoside triphosphate hydrolases"/>
    <property type="match status" value="1"/>
</dbReference>
<dbReference type="SUPFAM" id="SSF50447">
    <property type="entry name" value="Translation proteins"/>
    <property type="match status" value="1"/>
</dbReference>
<dbReference type="PROSITE" id="PS00301">
    <property type="entry name" value="G_TR_1"/>
    <property type="match status" value="1"/>
</dbReference>
<dbReference type="PROSITE" id="PS51722">
    <property type="entry name" value="G_TR_2"/>
    <property type="match status" value="1"/>
</dbReference>
<protein>
    <recommendedName>
        <fullName evidence="1">Elongation factor 4</fullName>
        <shortName evidence="1">EF-4</shortName>
        <ecNumber evidence="1">3.6.5.n1</ecNumber>
    </recommendedName>
    <alternativeName>
        <fullName evidence="1">Ribosomal back-translocase LepA</fullName>
    </alternativeName>
</protein>
<name>LEPA_PROMT</name>
<sequence>MTNVPISRLRNFCIIAHIDHGKSTLADRLLQDTGTVSSRDMQEQFLDNMDLERERGITIKLQAARMNYKADDGEEYVLNLIDTPGHVDFSYEVSRSLQACEGALLVVDASQGVEAQTLANVYLALENDLEIIPVLNKVDLPGADPEKIKNEIESIIGLDTSKAISCSAKTGVGIPEILQAVVDRIPSPKDNTDQATKALIFDSYYDPYRGVIVYFRIMSGGISKKDKVLLMSSKKSYELDEIGVMAPDQVKVNSLHAGEVGYLAASIKAVADARVGDTITLVDRPAQDALPGYAEAKPMVFCGLFPTDADQYPDLRDALDKLQLSDAALKYEPETSSAMGFGFRCGFLGLLHMEIVQERLEREYDLDLIVTAPSVIYKVKMIDGEIRMIDNPATLPDPQKRETIEEPYVRMEIYAPNDYNGTLMGLCQDRRGDFIDMKYITTDRVTLIYEIPLAEVVTDFFDQMKSRTKGYASMEYHLIGYRENDLVRLDVLINSERADPLTTIVHKDNAYGVGKGLVEKLKELIPKQQFKIPLQASIGSRIIASEGISALRKDVLSKCYGGDISRKKKLLKKQAKGKKRMKSMGKVDVPQEAFMAVLKLNKD</sequence>
<feature type="chain" id="PRO_0000224782" description="Elongation factor 4">
    <location>
        <begin position="1"/>
        <end position="603"/>
    </location>
</feature>
<feature type="domain" description="tr-type G">
    <location>
        <begin position="7"/>
        <end position="189"/>
    </location>
</feature>
<feature type="binding site" evidence="1">
    <location>
        <begin position="19"/>
        <end position="24"/>
    </location>
    <ligand>
        <name>GTP</name>
        <dbReference type="ChEBI" id="CHEBI:37565"/>
    </ligand>
</feature>
<feature type="binding site" evidence="1">
    <location>
        <begin position="136"/>
        <end position="139"/>
    </location>
    <ligand>
        <name>GTP</name>
        <dbReference type="ChEBI" id="CHEBI:37565"/>
    </ligand>
</feature>